<dbReference type="EMBL" id="AE010299">
    <property type="protein sequence ID" value="AAM06783.1"/>
    <property type="status" value="ALT_INIT"/>
    <property type="molecule type" value="Genomic_DNA"/>
</dbReference>
<dbReference type="RefSeq" id="WP_011023341.1">
    <property type="nucleotide sequence ID" value="NC_003552.1"/>
</dbReference>
<dbReference type="SMR" id="Q8TKI9"/>
<dbReference type="FunCoup" id="Q8TKI9">
    <property type="interactions" value="156"/>
</dbReference>
<dbReference type="STRING" id="188937.MA_3416"/>
<dbReference type="EnsemblBacteria" id="AAM06783">
    <property type="protein sequence ID" value="AAM06783"/>
    <property type="gene ID" value="MA_3416"/>
</dbReference>
<dbReference type="GeneID" id="1475309"/>
<dbReference type="KEGG" id="mac:MA_3416"/>
<dbReference type="HOGENOM" id="CLU_062507_1_0_2"/>
<dbReference type="InParanoid" id="Q8TKI9"/>
<dbReference type="OrthoDB" id="30639at2157"/>
<dbReference type="PhylomeDB" id="Q8TKI9"/>
<dbReference type="Proteomes" id="UP000002487">
    <property type="component" value="Chromosome"/>
</dbReference>
<dbReference type="GO" id="GO:0005829">
    <property type="term" value="C:cytosol"/>
    <property type="evidence" value="ECO:0000318"/>
    <property type="project" value="GO_Central"/>
</dbReference>
<dbReference type="GO" id="GO:1990904">
    <property type="term" value="C:ribonucleoprotein complex"/>
    <property type="evidence" value="ECO:0007669"/>
    <property type="project" value="UniProtKB-KW"/>
</dbReference>
<dbReference type="GO" id="GO:0005840">
    <property type="term" value="C:ribosome"/>
    <property type="evidence" value="ECO:0007669"/>
    <property type="project" value="UniProtKB-KW"/>
</dbReference>
<dbReference type="GO" id="GO:0003735">
    <property type="term" value="F:structural constituent of ribosome"/>
    <property type="evidence" value="ECO:0007669"/>
    <property type="project" value="InterPro"/>
</dbReference>
<dbReference type="GO" id="GO:0006412">
    <property type="term" value="P:translation"/>
    <property type="evidence" value="ECO:0007669"/>
    <property type="project" value="UniProtKB-UniRule"/>
</dbReference>
<dbReference type="HAMAP" id="MF_00359">
    <property type="entry name" value="Ribosomal_eS1"/>
    <property type="match status" value="1"/>
</dbReference>
<dbReference type="InterPro" id="IPR001593">
    <property type="entry name" value="Ribosomal_eS1"/>
</dbReference>
<dbReference type="InterPro" id="IPR030838">
    <property type="entry name" value="Ribosomal_eS1_arc"/>
</dbReference>
<dbReference type="InterPro" id="IPR018281">
    <property type="entry name" value="Ribosomal_eS1_CS"/>
</dbReference>
<dbReference type="NCBIfam" id="NF003142">
    <property type="entry name" value="PRK04057.1"/>
    <property type="match status" value="1"/>
</dbReference>
<dbReference type="PANTHER" id="PTHR11830">
    <property type="entry name" value="40S RIBOSOMAL PROTEIN S3A"/>
    <property type="match status" value="1"/>
</dbReference>
<dbReference type="Pfam" id="PF01015">
    <property type="entry name" value="Ribosomal_S3Ae"/>
    <property type="match status" value="1"/>
</dbReference>
<dbReference type="SMART" id="SM01397">
    <property type="entry name" value="Ribosomal_S3Ae"/>
    <property type="match status" value="1"/>
</dbReference>
<dbReference type="PROSITE" id="PS01191">
    <property type="entry name" value="RIBOSOMAL_S3AE"/>
    <property type="match status" value="1"/>
</dbReference>
<keyword id="KW-1185">Reference proteome</keyword>
<keyword id="KW-0687">Ribonucleoprotein</keyword>
<keyword id="KW-0689">Ribosomal protein</keyword>
<name>RS3A_METAC</name>
<proteinExistence type="inferred from homology"/>
<feature type="chain" id="PRO_0000153547" description="Small ribosomal subunit protein eS1">
    <location>
        <begin position="1"/>
        <end position="203"/>
    </location>
</feature>
<reference key="1">
    <citation type="journal article" date="2002" name="Genome Res.">
        <title>The genome of Methanosarcina acetivorans reveals extensive metabolic and physiological diversity.</title>
        <authorList>
            <person name="Galagan J.E."/>
            <person name="Nusbaum C."/>
            <person name="Roy A."/>
            <person name="Endrizzi M.G."/>
            <person name="Macdonald P."/>
            <person name="FitzHugh W."/>
            <person name="Calvo S."/>
            <person name="Engels R."/>
            <person name="Smirnov S."/>
            <person name="Atnoor D."/>
            <person name="Brown A."/>
            <person name="Allen N."/>
            <person name="Naylor J."/>
            <person name="Stange-Thomann N."/>
            <person name="DeArellano K."/>
            <person name="Johnson R."/>
            <person name="Linton L."/>
            <person name="McEwan P."/>
            <person name="McKernan K."/>
            <person name="Talamas J."/>
            <person name="Tirrell A."/>
            <person name="Ye W."/>
            <person name="Zimmer A."/>
            <person name="Barber R.D."/>
            <person name="Cann I."/>
            <person name="Graham D.E."/>
            <person name="Grahame D.A."/>
            <person name="Guss A.M."/>
            <person name="Hedderich R."/>
            <person name="Ingram-Smith C."/>
            <person name="Kuettner H.C."/>
            <person name="Krzycki J.A."/>
            <person name="Leigh J.A."/>
            <person name="Li W."/>
            <person name="Liu J."/>
            <person name="Mukhopadhyay B."/>
            <person name="Reeve J.N."/>
            <person name="Smith K."/>
            <person name="Springer T.A."/>
            <person name="Umayam L.A."/>
            <person name="White O."/>
            <person name="White R.H."/>
            <person name="de Macario E.C."/>
            <person name="Ferry J.G."/>
            <person name="Jarrell K.F."/>
            <person name="Jing H."/>
            <person name="Macario A.J.L."/>
            <person name="Paulsen I.T."/>
            <person name="Pritchett M."/>
            <person name="Sowers K.R."/>
            <person name="Swanson R.V."/>
            <person name="Zinder S.H."/>
            <person name="Lander E."/>
            <person name="Metcalf W.W."/>
            <person name="Birren B."/>
        </authorList>
    </citation>
    <scope>NUCLEOTIDE SEQUENCE [LARGE SCALE GENOMIC DNA]</scope>
    <source>
        <strain>ATCC 35395 / DSM 2834 / JCM 12185 / C2A</strain>
    </source>
</reference>
<evidence type="ECO:0000255" key="1">
    <source>
        <dbReference type="HAMAP-Rule" id="MF_00359"/>
    </source>
</evidence>
<evidence type="ECO:0000305" key="2"/>
<accession>Q8TKI9</accession>
<comment type="similarity">
    <text evidence="1">Belongs to the eukaryotic ribosomal protein eS1 family.</text>
</comment>
<comment type="sequence caution" evidence="2">
    <conflict type="erroneous initiation">
        <sequence resource="EMBL-CDS" id="AAM06783"/>
    </conflict>
    <text>Truncated N-terminus.</text>
</comment>
<organism>
    <name type="scientific">Methanosarcina acetivorans (strain ATCC 35395 / DSM 2834 / JCM 12185 / C2A)</name>
    <dbReference type="NCBI Taxonomy" id="188937"/>
    <lineage>
        <taxon>Archaea</taxon>
        <taxon>Methanobacteriati</taxon>
        <taxon>Methanobacteriota</taxon>
        <taxon>Stenosarchaea group</taxon>
        <taxon>Methanomicrobia</taxon>
        <taxon>Methanosarcinales</taxon>
        <taxon>Methanosarcinaceae</taxon>
        <taxon>Methanosarcina</taxon>
    </lineage>
</organism>
<sequence>MARKKVQRKLDGWKSKEWYNIEAPVYLNRAIVGNTMAGDPSLLVGRNVETTVGELTNDMTKNNTKVILRINNVVGDIATTDLMGHELTTDYIRSIVKRQTSRIDANVDVKTKDGYVIRVKPTCFTIKRARSSQMQAIREMMVEIVKKRAAESDFETFMQEAILGRLSAAIYRQAKFIYPLRRVEIRKTEVETIPAAAPAPAAA</sequence>
<protein>
    <recommendedName>
        <fullName evidence="1">Small ribosomal subunit protein eS1</fullName>
    </recommendedName>
    <alternativeName>
        <fullName evidence="2">30S ribosomal protein S3Ae</fullName>
    </alternativeName>
    <alternativeName>
        <fullName evidence="1">Ribosomal protein S1e</fullName>
    </alternativeName>
</protein>
<gene>
    <name evidence="1" type="primary">rps3ae</name>
    <name type="ordered locus">MA_3416</name>
</gene>